<reference key="1">
    <citation type="journal article" date="2009" name="Proc. Natl. Acad. Sci. U.S.A.">
        <title>The genomic basis of trophic strategy in marine bacteria.</title>
        <authorList>
            <person name="Lauro F.M."/>
            <person name="McDougald D."/>
            <person name="Thomas T."/>
            <person name="Williams T.J."/>
            <person name="Egan S."/>
            <person name="Rice S."/>
            <person name="DeMaere M.Z."/>
            <person name="Ting L."/>
            <person name="Ertan H."/>
            <person name="Johnson J."/>
            <person name="Ferriera S."/>
            <person name="Lapidus A."/>
            <person name="Anderson I."/>
            <person name="Kyrpides N."/>
            <person name="Munk A.C."/>
            <person name="Detter C."/>
            <person name="Han C.S."/>
            <person name="Brown M.V."/>
            <person name="Robb F.T."/>
            <person name="Kjelleberg S."/>
            <person name="Cavicchioli R."/>
        </authorList>
    </citation>
    <scope>NUCLEOTIDE SEQUENCE [LARGE SCALE GENOMIC DNA]</scope>
    <source>
        <strain>DSM 13593 / LMG 18877 / RB2256</strain>
    </source>
</reference>
<proteinExistence type="inferred from homology"/>
<organism>
    <name type="scientific">Sphingopyxis alaskensis (strain DSM 13593 / LMG 18877 / RB2256)</name>
    <name type="common">Sphingomonas alaskensis</name>
    <dbReference type="NCBI Taxonomy" id="317655"/>
    <lineage>
        <taxon>Bacteria</taxon>
        <taxon>Pseudomonadati</taxon>
        <taxon>Pseudomonadota</taxon>
        <taxon>Alphaproteobacteria</taxon>
        <taxon>Sphingomonadales</taxon>
        <taxon>Sphingomonadaceae</taxon>
        <taxon>Sphingopyxis</taxon>
    </lineage>
</organism>
<gene>
    <name evidence="1" type="primary">rlmH</name>
    <name type="ordered locus">Sala_0576</name>
</gene>
<name>RLMH_SPHAL</name>
<comment type="function">
    <text evidence="1">Specifically methylates the pseudouridine at position 1915 (m3Psi1915) in 23S rRNA.</text>
</comment>
<comment type="catalytic activity">
    <reaction evidence="1">
        <text>pseudouridine(1915) in 23S rRNA + S-adenosyl-L-methionine = N(3)-methylpseudouridine(1915) in 23S rRNA + S-adenosyl-L-homocysteine + H(+)</text>
        <dbReference type="Rhea" id="RHEA:42752"/>
        <dbReference type="Rhea" id="RHEA-COMP:10221"/>
        <dbReference type="Rhea" id="RHEA-COMP:10222"/>
        <dbReference type="ChEBI" id="CHEBI:15378"/>
        <dbReference type="ChEBI" id="CHEBI:57856"/>
        <dbReference type="ChEBI" id="CHEBI:59789"/>
        <dbReference type="ChEBI" id="CHEBI:65314"/>
        <dbReference type="ChEBI" id="CHEBI:74486"/>
        <dbReference type="EC" id="2.1.1.177"/>
    </reaction>
</comment>
<comment type="subunit">
    <text evidence="1">Homodimer.</text>
</comment>
<comment type="subcellular location">
    <subcellularLocation>
        <location evidence="1">Cytoplasm</location>
    </subcellularLocation>
</comment>
<comment type="similarity">
    <text evidence="1">Belongs to the RNA methyltransferase RlmH family.</text>
</comment>
<dbReference type="EC" id="2.1.1.177" evidence="1"/>
<dbReference type="EMBL" id="CP000356">
    <property type="protein sequence ID" value="ABF52297.1"/>
    <property type="molecule type" value="Genomic_DNA"/>
</dbReference>
<dbReference type="RefSeq" id="WP_011540887.1">
    <property type="nucleotide sequence ID" value="NC_008048.1"/>
</dbReference>
<dbReference type="SMR" id="Q1GVM5"/>
<dbReference type="STRING" id="317655.Sala_0576"/>
<dbReference type="KEGG" id="sal:Sala_0576"/>
<dbReference type="eggNOG" id="COG1576">
    <property type="taxonomic scope" value="Bacteria"/>
</dbReference>
<dbReference type="HOGENOM" id="CLU_100552_1_1_5"/>
<dbReference type="OrthoDB" id="9806643at2"/>
<dbReference type="Proteomes" id="UP000006578">
    <property type="component" value="Chromosome"/>
</dbReference>
<dbReference type="GO" id="GO:0005737">
    <property type="term" value="C:cytoplasm"/>
    <property type="evidence" value="ECO:0007669"/>
    <property type="project" value="UniProtKB-SubCell"/>
</dbReference>
<dbReference type="GO" id="GO:0070038">
    <property type="term" value="F:rRNA (pseudouridine-N3-)-methyltransferase activity"/>
    <property type="evidence" value="ECO:0007669"/>
    <property type="project" value="UniProtKB-UniRule"/>
</dbReference>
<dbReference type="CDD" id="cd18081">
    <property type="entry name" value="RlmH-like"/>
    <property type="match status" value="1"/>
</dbReference>
<dbReference type="Gene3D" id="3.40.1280.10">
    <property type="match status" value="1"/>
</dbReference>
<dbReference type="HAMAP" id="MF_00658">
    <property type="entry name" value="23SrRNA_methyltr_H"/>
    <property type="match status" value="1"/>
</dbReference>
<dbReference type="InterPro" id="IPR029028">
    <property type="entry name" value="Alpha/beta_knot_MTases"/>
</dbReference>
<dbReference type="InterPro" id="IPR003742">
    <property type="entry name" value="RlmH-like"/>
</dbReference>
<dbReference type="InterPro" id="IPR029026">
    <property type="entry name" value="tRNA_m1G_MTases_N"/>
</dbReference>
<dbReference type="PANTHER" id="PTHR33603">
    <property type="entry name" value="METHYLTRANSFERASE"/>
    <property type="match status" value="1"/>
</dbReference>
<dbReference type="PANTHER" id="PTHR33603:SF1">
    <property type="entry name" value="RIBOSOMAL RNA LARGE SUBUNIT METHYLTRANSFERASE H"/>
    <property type="match status" value="1"/>
</dbReference>
<dbReference type="Pfam" id="PF02590">
    <property type="entry name" value="SPOUT_MTase"/>
    <property type="match status" value="1"/>
</dbReference>
<dbReference type="PIRSF" id="PIRSF004505">
    <property type="entry name" value="MT_bac"/>
    <property type="match status" value="1"/>
</dbReference>
<dbReference type="SUPFAM" id="SSF75217">
    <property type="entry name" value="alpha/beta knot"/>
    <property type="match status" value="1"/>
</dbReference>
<accession>Q1GVM5</accession>
<evidence type="ECO:0000255" key="1">
    <source>
        <dbReference type="HAMAP-Rule" id="MF_00658"/>
    </source>
</evidence>
<keyword id="KW-0963">Cytoplasm</keyword>
<keyword id="KW-0489">Methyltransferase</keyword>
<keyword id="KW-1185">Reference proteome</keyword>
<keyword id="KW-0698">rRNA processing</keyword>
<keyword id="KW-0949">S-adenosyl-L-methionine</keyword>
<keyword id="KW-0808">Transferase</keyword>
<protein>
    <recommendedName>
        <fullName evidence="1">Ribosomal RNA large subunit methyltransferase H</fullName>
        <ecNumber evidence="1">2.1.1.177</ecNumber>
    </recommendedName>
    <alternativeName>
        <fullName evidence="1">23S rRNA (pseudouridine1915-N3)-methyltransferase</fullName>
    </alternativeName>
    <alternativeName>
        <fullName evidence="1">23S rRNA m3Psi1915 methyltransferase</fullName>
    </alternativeName>
    <alternativeName>
        <fullName evidence="1">rRNA (pseudouridine-N3-)-methyltransferase RlmH</fullName>
    </alternativeName>
</protein>
<feature type="chain" id="PRO_0000260613" description="Ribosomal RNA large subunit methyltransferase H">
    <location>
        <begin position="1"/>
        <end position="142"/>
    </location>
</feature>
<feature type="binding site" evidence="1">
    <location>
        <position position="55"/>
    </location>
    <ligand>
        <name>S-adenosyl-L-methionine</name>
        <dbReference type="ChEBI" id="CHEBI:59789"/>
    </ligand>
</feature>
<feature type="binding site" evidence="1">
    <location>
        <position position="87"/>
    </location>
    <ligand>
        <name>S-adenosyl-L-methionine</name>
        <dbReference type="ChEBI" id="CHEBI:59789"/>
    </ligand>
</feature>
<sequence length="142" mass="15738">MLLHIIARGRIGRGPEAELVERYMKRVTWAQKISELPDTGGRVPAAAAGSRTILLDEGGEQMSSLEFANLLENWRDGGVREARFCIGAADGFTPDERKGADKVIAFGRATWPHLMARAMLAEQLWRATSIIAGHPYHREGRQ</sequence>